<reference key="1">
    <citation type="journal article" date="2004" name="Nature">
        <title>Genome evolution in yeasts.</title>
        <authorList>
            <person name="Dujon B."/>
            <person name="Sherman D."/>
            <person name="Fischer G."/>
            <person name="Durrens P."/>
            <person name="Casaregola S."/>
            <person name="Lafontaine I."/>
            <person name="de Montigny J."/>
            <person name="Marck C."/>
            <person name="Neuveglise C."/>
            <person name="Talla E."/>
            <person name="Goffard N."/>
            <person name="Frangeul L."/>
            <person name="Aigle M."/>
            <person name="Anthouard V."/>
            <person name="Babour A."/>
            <person name="Barbe V."/>
            <person name="Barnay S."/>
            <person name="Blanchin S."/>
            <person name="Beckerich J.-M."/>
            <person name="Beyne E."/>
            <person name="Bleykasten C."/>
            <person name="Boisrame A."/>
            <person name="Boyer J."/>
            <person name="Cattolico L."/>
            <person name="Confanioleri F."/>
            <person name="de Daruvar A."/>
            <person name="Despons L."/>
            <person name="Fabre E."/>
            <person name="Fairhead C."/>
            <person name="Ferry-Dumazet H."/>
            <person name="Groppi A."/>
            <person name="Hantraye F."/>
            <person name="Hennequin C."/>
            <person name="Jauniaux N."/>
            <person name="Joyet P."/>
            <person name="Kachouri R."/>
            <person name="Kerrest A."/>
            <person name="Koszul R."/>
            <person name="Lemaire M."/>
            <person name="Lesur I."/>
            <person name="Ma L."/>
            <person name="Muller H."/>
            <person name="Nicaud J.-M."/>
            <person name="Nikolski M."/>
            <person name="Oztas S."/>
            <person name="Ozier-Kalogeropoulos O."/>
            <person name="Pellenz S."/>
            <person name="Potier S."/>
            <person name="Richard G.-F."/>
            <person name="Straub M.-L."/>
            <person name="Suleau A."/>
            <person name="Swennen D."/>
            <person name="Tekaia F."/>
            <person name="Wesolowski-Louvel M."/>
            <person name="Westhof E."/>
            <person name="Wirth B."/>
            <person name="Zeniou-Meyer M."/>
            <person name="Zivanovic Y."/>
            <person name="Bolotin-Fukuhara M."/>
            <person name="Thierry A."/>
            <person name="Bouchier C."/>
            <person name="Caudron B."/>
            <person name="Scarpelli C."/>
            <person name="Gaillardin C."/>
            <person name="Weissenbach J."/>
            <person name="Wincker P."/>
            <person name="Souciet J.-L."/>
        </authorList>
    </citation>
    <scope>NUCLEOTIDE SEQUENCE [LARGE SCALE GENOMIC DNA]</scope>
    <source>
        <strain>ATCC 2001 / BCRC 20586 / JCM 3761 / NBRC 0622 / NRRL Y-65 / CBS 138</strain>
    </source>
</reference>
<gene>
    <name type="primary">IRC6</name>
    <name type="ordered locus">CAGL0C02079g</name>
</gene>
<comment type="function">
    <text evidence="1">Involved in gross chromosomal rearrangements (GCRs) and telomere healing.</text>
</comment>
<comment type="similarity">
    <text evidence="3">Belongs to the IRC6 family.</text>
</comment>
<feature type="chain" id="PRO_0000399219" description="Increased recombination centers protein 6">
    <location>
        <begin position="1"/>
        <end position="265"/>
    </location>
</feature>
<feature type="region of interest" description="Disordered" evidence="2">
    <location>
        <begin position="1"/>
        <end position="21"/>
    </location>
</feature>
<organism>
    <name type="scientific">Candida glabrata (strain ATCC 2001 / BCRC 20586 / JCM 3761 / NBRC 0622 / NRRL Y-65 / CBS 138)</name>
    <name type="common">Yeast</name>
    <name type="synonym">Nakaseomyces glabratus</name>
    <dbReference type="NCBI Taxonomy" id="284593"/>
    <lineage>
        <taxon>Eukaryota</taxon>
        <taxon>Fungi</taxon>
        <taxon>Dikarya</taxon>
        <taxon>Ascomycota</taxon>
        <taxon>Saccharomycotina</taxon>
        <taxon>Saccharomycetes</taxon>
        <taxon>Saccharomycetales</taxon>
        <taxon>Saccharomycetaceae</taxon>
        <taxon>Nakaseomyces</taxon>
    </lineage>
</organism>
<protein>
    <recommendedName>
        <fullName>Increased recombination centers protein 6</fullName>
    </recommendedName>
</protein>
<dbReference type="EMBL" id="CR380949">
    <property type="protein sequence ID" value="CAG58172.1"/>
    <property type="molecule type" value="Genomic_DNA"/>
</dbReference>
<dbReference type="RefSeq" id="XP_445266.1">
    <property type="nucleotide sequence ID" value="XM_445266.1"/>
</dbReference>
<dbReference type="SMR" id="Q6FWX8"/>
<dbReference type="FunCoup" id="Q6FWX8">
    <property type="interactions" value="26"/>
</dbReference>
<dbReference type="STRING" id="284593.Q6FWX8"/>
<dbReference type="EnsemblFungi" id="CAGL0C02079g-T">
    <property type="protein sequence ID" value="CAGL0C02079g-T-p1"/>
    <property type="gene ID" value="CAGL0C02079g"/>
</dbReference>
<dbReference type="KEGG" id="cgr:2886863"/>
<dbReference type="CGD" id="CAL0127220">
    <property type="gene designation" value="CAGL0C02079g"/>
</dbReference>
<dbReference type="VEuPathDB" id="FungiDB:CAGL0C02079g"/>
<dbReference type="eggNOG" id="ENOG502S7AE">
    <property type="taxonomic scope" value="Eukaryota"/>
</dbReference>
<dbReference type="HOGENOM" id="CLU_079666_0_0_1"/>
<dbReference type="InParanoid" id="Q6FWX8"/>
<dbReference type="OMA" id="GMESACT"/>
<dbReference type="Proteomes" id="UP000002428">
    <property type="component" value="Chromosome C"/>
</dbReference>
<dbReference type="GO" id="GO:0030674">
    <property type="term" value="F:protein-macromolecule adaptor activity"/>
    <property type="evidence" value="ECO:0007669"/>
    <property type="project" value="TreeGrafter"/>
</dbReference>
<dbReference type="GO" id="GO:0016192">
    <property type="term" value="P:vesicle-mediated transport"/>
    <property type="evidence" value="ECO:0007669"/>
    <property type="project" value="InterPro"/>
</dbReference>
<dbReference type="Gene3D" id="3.40.50.11960">
    <property type="match status" value="1"/>
</dbReference>
<dbReference type="InterPro" id="IPR034627">
    <property type="entry name" value="Irc6"/>
</dbReference>
<dbReference type="PANTHER" id="PTHR28043">
    <property type="entry name" value="INCREASED RECOMBINATION CENTERS PROTEIN 6"/>
    <property type="match status" value="1"/>
</dbReference>
<dbReference type="PANTHER" id="PTHR28043:SF1">
    <property type="entry name" value="INCREASED RECOMBINATION CENTERS PROTEIN 6"/>
    <property type="match status" value="1"/>
</dbReference>
<dbReference type="Pfam" id="PF10199">
    <property type="entry name" value="Adaptin_binding"/>
    <property type="match status" value="1"/>
</dbReference>
<keyword id="KW-0160">Chromosomal rearrangement</keyword>
<keyword id="KW-1185">Reference proteome</keyword>
<sequence length="265" mass="30313">MLDESSSSDESRATELPVSSEDECEEVTDAKVLPNKVLVVFEGESTLFRDQLLDTVFGVQDQGNIVKQLSWDTKYYAVEYDLYVDECVDIHGWLNEVNSDDYEELRDLLTMIIIVRSFDSTQDTKEYNSVLYDFIQGNSVSVISVNTNSARQVKDTYDEFLELDASSIEFINYHDDRVEKETNECKGMARLKEIIDTHPWTDCKVVLKNKESTSDKVNKPDLEYLIDTLKKAKIHYQKLSNGSDGFSEEAEQFALQMATDIANNL</sequence>
<evidence type="ECO:0000250" key="1"/>
<evidence type="ECO:0000256" key="2">
    <source>
        <dbReference type="SAM" id="MobiDB-lite"/>
    </source>
</evidence>
<evidence type="ECO:0000305" key="3"/>
<accession>Q6FWX8</accession>
<proteinExistence type="inferred from homology"/>
<name>IRC6_CANGA</name>